<name>Y4905_FLAJ1</name>
<feature type="chain" id="PRO_1000082767" description="UPF0246 protein Fjoh_4905">
    <location>
        <begin position="1"/>
        <end position="252"/>
    </location>
</feature>
<comment type="similarity">
    <text evidence="1">Belongs to the UPF0246 family.</text>
</comment>
<dbReference type="EMBL" id="CP000685">
    <property type="protein sequence ID" value="ABQ07904.1"/>
    <property type="molecule type" value="Genomic_DNA"/>
</dbReference>
<dbReference type="RefSeq" id="WP_012026870.1">
    <property type="nucleotide sequence ID" value="NC_009441.1"/>
</dbReference>
<dbReference type="SMR" id="A5FA67"/>
<dbReference type="KEGG" id="fjo:Fjoh_4905"/>
<dbReference type="eggNOG" id="COG3022">
    <property type="taxonomic scope" value="Bacteria"/>
</dbReference>
<dbReference type="HOGENOM" id="CLU_061989_0_0_10"/>
<dbReference type="OrthoDB" id="9777133at2"/>
<dbReference type="Proteomes" id="UP000006694">
    <property type="component" value="Chromosome"/>
</dbReference>
<dbReference type="GO" id="GO:0005829">
    <property type="term" value="C:cytosol"/>
    <property type="evidence" value="ECO:0007669"/>
    <property type="project" value="TreeGrafter"/>
</dbReference>
<dbReference type="GO" id="GO:0033194">
    <property type="term" value="P:response to hydroperoxide"/>
    <property type="evidence" value="ECO:0007669"/>
    <property type="project" value="TreeGrafter"/>
</dbReference>
<dbReference type="HAMAP" id="MF_00652">
    <property type="entry name" value="UPF0246"/>
    <property type="match status" value="1"/>
</dbReference>
<dbReference type="InterPro" id="IPR005583">
    <property type="entry name" value="YaaA"/>
</dbReference>
<dbReference type="NCBIfam" id="NF002542">
    <property type="entry name" value="PRK02101.1-3"/>
    <property type="match status" value="1"/>
</dbReference>
<dbReference type="PANTHER" id="PTHR30283:SF4">
    <property type="entry name" value="PEROXIDE STRESS RESISTANCE PROTEIN YAAA"/>
    <property type="match status" value="1"/>
</dbReference>
<dbReference type="PANTHER" id="PTHR30283">
    <property type="entry name" value="PEROXIDE STRESS RESPONSE PROTEIN YAAA"/>
    <property type="match status" value="1"/>
</dbReference>
<dbReference type="Pfam" id="PF03883">
    <property type="entry name" value="H2O2_YaaD"/>
    <property type="match status" value="1"/>
</dbReference>
<proteinExistence type="inferred from homology"/>
<organism>
    <name type="scientific">Flavobacterium johnsoniae (strain ATCC 17061 / DSM 2064 / JCM 8514 / BCRC 14874 / CCUG 350202 / NBRC 14942 / NCIMB 11054 / UW101)</name>
    <name type="common">Cytophaga johnsonae</name>
    <dbReference type="NCBI Taxonomy" id="376686"/>
    <lineage>
        <taxon>Bacteria</taxon>
        <taxon>Pseudomonadati</taxon>
        <taxon>Bacteroidota</taxon>
        <taxon>Flavobacteriia</taxon>
        <taxon>Flavobacteriales</taxon>
        <taxon>Flavobacteriaceae</taxon>
        <taxon>Flavobacterium</taxon>
    </lineage>
</organism>
<gene>
    <name type="ordered locus">Fjoh_4905</name>
</gene>
<protein>
    <recommendedName>
        <fullName evidence="1">UPF0246 protein Fjoh_4905</fullName>
    </recommendedName>
</protein>
<accession>A5FA67</accession>
<evidence type="ECO:0000255" key="1">
    <source>
        <dbReference type="HAMAP-Rule" id="MF_00652"/>
    </source>
</evidence>
<sequence length="252" mass="28864">MKIVISPAKSLNFEKELPTSQYTEPSFLKEARVVHKVVKTKKPSELSELMSISDKLADLNWKRNQDWKTPFTPENARPAVYTFDGDVYTGLDAYSIPLEKLDALQDKLRILSGLYGLLKPLDLMQAYRLEMGTKMPVGESKNLHEFWKPTVTKALNKELKKDELFVNLASNEYFSAVDVKALKVPVITPDFKDYKDGKLKMISFFAKKARGMMVRYIIDTNAETIDDLKGFNYEGYKFDANLSKGNHLVFTR</sequence>
<reference key="1">
    <citation type="journal article" date="2009" name="Appl. Environ. Microbiol.">
        <title>Novel features of the polysaccharide-digesting gliding bacterium Flavobacterium johnsoniae as revealed by genome sequence analysis.</title>
        <authorList>
            <person name="McBride M.J."/>
            <person name="Xie G."/>
            <person name="Martens E.C."/>
            <person name="Lapidus A."/>
            <person name="Henrissat B."/>
            <person name="Rhodes R.G."/>
            <person name="Goltsman E."/>
            <person name="Wang W."/>
            <person name="Xu J."/>
            <person name="Hunnicutt D.W."/>
            <person name="Staroscik A.M."/>
            <person name="Hoover T.R."/>
            <person name="Cheng Y.Q."/>
            <person name="Stein J.L."/>
        </authorList>
    </citation>
    <scope>NUCLEOTIDE SEQUENCE [LARGE SCALE GENOMIC DNA]</scope>
    <source>
        <strain>ATCC 17061 / DSM 2064 / JCM 8514 / BCRC 14874 / CCUG 350202 / NBRC 14942 / NCIMB 11054 / UW101</strain>
    </source>
</reference>